<feature type="chain" id="PRO_0000334433" description="Na(+)/H(+) antiporter NhaA">
    <location>
        <begin position="1"/>
        <end position="389"/>
    </location>
</feature>
<feature type="transmembrane region" description="Helical" evidence="1">
    <location>
        <begin position="17"/>
        <end position="37"/>
    </location>
</feature>
<feature type="transmembrane region" description="Helical" evidence="1">
    <location>
        <begin position="59"/>
        <end position="79"/>
    </location>
</feature>
<feature type="transmembrane region" description="Helical" evidence="1">
    <location>
        <begin position="95"/>
        <end position="115"/>
    </location>
</feature>
<feature type="transmembrane region" description="Helical" evidence="1">
    <location>
        <begin position="124"/>
        <end position="144"/>
    </location>
</feature>
<feature type="transmembrane region" description="Helical" evidence="1">
    <location>
        <begin position="154"/>
        <end position="174"/>
    </location>
</feature>
<feature type="transmembrane region" description="Helical" evidence="1">
    <location>
        <begin position="177"/>
        <end position="197"/>
    </location>
</feature>
<feature type="transmembrane region" description="Helical" evidence="1">
    <location>
        <begin position="213"/>
        <end position="233"/>
    </location>
</feature>
<feature type="transmembrane region" description="Helical" evidence="1">
    <location>
        <begin position="261"/>
        <end position="281"/>
    </location>
</feature>
<feature type="transmembrane region" description="Helical" evidence="1">
    <location>
        <begin position="287"/>
        <end position="307"/>
    </location>
</feature>
<feature type="transmembrane region" description="Helical" evidence="1">
    <location>
        <begin position="328"/>
        <end position="348"/>
    </location>
</feature>
<feature type="transmembrane region" description="Helical" evidence="1">
    <location>
        <begin position="363"/>
        <end position="383"/>
    </location>
</feature>
<protein>
    <recommendedName>
        <fullName evidence="1">Na(+)/H(+) antiporter NhaA</fullName>
    </recommendedName>
    <alternativeName>
        <fullName evidence="1">Sodium/proton antiporter NhaA</fullName>
    </alternativeName>
</protein>
<organism>
    <name type="scientific">Shewanella sp. (strain MR-7)</name>
    <dbReference type="NCBI Taxonomy" id="60481"/>
    <lineage>
        <taxon>Bacteria</taxon>
        <taxon>Pseudomonadati</taxon>
        <taxon>Pseudomonadota</taxon>
        <taxon>Gammaproteobacteria</taxon>
        <taxon>Alteromonadales</taxon>
        <taxon>Shewanellaceae</taxon>
        <taxon>Shewanella</taxon>
    </lineage>
</organism>
<proteinExistence type="inferred from homology"/>
<reference key="1">
    <citation type="submission" date="2006-08" db="EMBL/GenBank/DDBJ databases">
        <title>Complete sequence of chromosome 1 of Shewanella sp. MR-7.</title>
        <authorList>
            <person name="Copeland A."/>
            <person name="Lucas S."/>
            <person name="Lapidus A."/>
            <person name="Barry K."/>
            <person name="Detter J.C."/>
            <person name="Glavina del Rio T."/>
            <person name="Hammon N."/>
            <person name="Israni S."/>
            <person name="Dalin E."/>
            <person name="Tice H."/>
            <person name="Pitluck S."/>
            <person name="Kiss H."/>
            <person name="Brettin T."/>
            <person name="Bruce D."/>
            <person name="Han C."/>
            <person name="Tapia R."/>
            <person name="Gilna P."/>
            <person name="Schmutz J."/>
            <person name="Larimer F."/>
            <person name="Land M."/>
            <person name="Hauser L."/>
            <person name="Kyrpides N."/>
            <person name="Mikhailova N."/>
            <person name="Nealson K."/>
            <person name="Konstantinidis K."/>
            <person name="Klappenbach J."/>
            <person name="Tiedje J."/>
            <person name="Richardson P."/>
        </authorList>
    </citation>
    <scope>NUCLEOTIDE SEQUENCE [LARGE SCALE GENOMIC DNA]</scope>
    <source>
        <strain>MR-7</strain>
    </source>
</reference>
<name>NHAA_SHESR</name>
<sequence>MEKAIRNFLSQESAGGILLLVAVALAMLMANSPLAGLYQGFLGTEVQVRVGALDLHKPLLLWINDGLMALFFLLIGLEVKRELLEGALSSVAQASLPTFAAIGGMLVPAGIYLLFNYGDPVTQAGWAIPAATDIAFALGIMALLGSRVPVALKVFLLALAIIDDLGVIVIIALFYSTDLSTISLIIASIAIVGLVALNRKGVTALAPYGVLGLVLWVAVLKSGVHATLAGVIIAFCIPLRAKDGSSPSEHLEHSLHPWSTFLILPVFAFANAGVALGNMSLNTLISPVPVGIALGLMLGKPIGVMLFSYAAVKLRLAQLPNGIGWKQIAPVAAMCGIGFTMSMFIASLAFEQADPMYGDLARLGTLIGSIIAALIGYFWLSKVLPKQGV</sequence>
<evidence type="ECO:0000255" key="1">
    <source>
        <dbReference type="HAMAP-Rule" id="MF_01844"/>
    </source>
</evidence>
<keyword id="KW-0050">Antiport</keyword>
<keyword id="KW-0997">Cell inner membrane</keyword>
<keyword id="KW-1003">Cell membrane</keyword>
<keyword id="KW-0406">Ion transport</keyword>
<keyword id="KW-0472">Membrane</keyword>
<keyword id="KW-0915">Sodium</keyword>
<keyword id="KW-0739">Sodium transport</keyword>
<keyword id="KW-0812">Transmembrane</keyword>
<keyword id="KW-1133">Transmembrane helix</keyword>
<keyword id="KW-0813">Transport</keyword>
<comment type="function">
    <text evidence="1">Na(+)/H(+) antiporter that extrudes sodium in exchange for external protons.</text>
</comment>
<comment type="catalytic activity">
    <reaction evidence="1">
        <text>Na(+)(in) + 2 H(+)(out) = Na(+)(out) + 2 H(+)(in)</text>
        <dbReference type="Rhea" id="RHEA:29251"/>
        <dbReference type="ChEBI" id="CHEBI:15378"/>
        <dbReference type="ChEBI" id="CHEBI:29101"/>
    </reaction>
    <physiologicalReaction direction="left-to-right" evidence="1">
        <dbReference type="Rhea" id="RHEA:29252"/>
    </physiologicalReaction>
</comment>
<comment type="subcellular location">
    <subcellularLocation>
        <location evidence="1">Cell inner membrane</location>
        <topology evidence="1">Multi-pass membrane protein</topology>
    </subcellularLocation>
</comment>
<comment type="similarity">
    <text evidence="1">Belongs to the NhaA Na(+)/H(+) (TC 2.A.33) antiporter family.</text>
</comment>
<accession>Q0HSH9</accession>
<dbReference type="EMBL" id="CP000444">
    <property type="protein sequence ID" value="ABI43926.1"/>
    <property type="molecule type" value="Genomic_DNA"/>
</dbReference>
<dbReference type="SMR" id="Q0HSH9"/>
<dbReference type="KEGG" id="shm:Shewmr7_2942"/>
<dbReference type="HOGENOM" id="CLU_015803_1_0_6"/>
<dbReference type="GO" id="GO:0005886">
    <property type="term" value="C:plasma membrane"/>
    <property type="evidence" value="ECO:0007669"/>
    <property type="project" value="UniProtKB-SubCell"/>
</dbReference>
<dbReference type="GO" id="GO:0015385">
    <property type="term" value="F:sodium:proton antiporter activity"/>
    <property type="evidence" value="ECO:0007669"/>
    <property type="project" value="TreeGrafter"/>
</dbReference>
<dbReference type="GO" id="GO:0006885">
    <property type="term" value="P:regulation of pH"/>
    <property type="evidence" value="ECO:0007669"/>
    <property type="project" value="InterPro"/>
</dbReference>
<dbReference type="Gene3D" id="1.20.1530.10">
    <property type="entry name" value="Na+/H+ antiporter like domain"/>
    <property type="match status" value="1"/>
</dbReference>
<dbReference type="HAMAP" id="MF_01844">
    <property type="entry name" value="NhaA"/>
    <property type="match status" value="1"/>
</dbReference>
<dbReference type="InterPro" id="IPR023171">
    <property type="entry name" value="Na/H_antiporter_dom_sf"/>
</dbReference>
<dbReference type="InterPro" id="IPR004670">
    <property type="entry name" value="NhaA"/>
</dbReference>
<dbReference type="NCBIfam" id="TIGR00773">
    <property type="entry name" value="NhaA"/>
    <property type="match status" value="1"/>
</dbReference>
<dbReference type="NCBIfam" id="NF007111">
    <property type="entry name" value="PRK09560.1"/>
    <property type="match status" value="1"/>
</dbReference>
<dbReference type="NCBIfam" id="NF007112">
    <property type="entry name" value="PRK09561.1"/>
    <property type="match status" value="1"/>
</dbReference>
<dbReference type="PANTHER" id="PTHR30341:SF0">
    <property type="entry name" value="NA(+)_H(+) ANTIPORTER NHAA"/>
    <property type="match status" value="1"/>
</dbReference>
<dbReference type="PANTHER" id="PTHR30341">
    <property type="entry name" value="SODIUM ION/PROTON ANTIPORTER NHAA-RELATED"/>
    <property type="match status" value="1"/>
</dbReference>
<dbReference type="Pfam" id="PF06965">
    <property type="entry name" value="Na_H_antiport_1"/>
    <property type="match status" value="1"/>
</dbReference>
<gene>
    <name evidence="1" type="primary">nhaA</name>
    <name type="ordered locus">Shewmr7_2942</name>
</gene>